<feature type="propeptide" id="PRO_0000022479" evidence="1">
    <location>
        <begin position="1"/>
        <end position="6"/>
    </location>
</feature>
<feature type="chain" id="PRO_0000022480" description="11.9 kDa wall protein">
    <location>
        <begin position="7"/>
        <end position="114"/>
    </location>
</feature>
<name>TDF1_TUBDR</name>
<gene>
    <name type="primary">TDF-1</name>
</gene>
<organism>
    <name type="scientific">Tuber dryophilum</name>
    <name type="common">Truffle</name>
    <dbReference type="NCBI Taxonomy" id="64384"/>
    <lineage>
        <taxon>Eukaryota</taxon>
        <taxon>Fungi</taxon>
        <taxon>Dikarya</taxon>
        <taxon>Ascomycota</taxon>
        <taxon>Pezizomycotina</taxon>
        <taxon>Pezizomycetes</taxon>
        <taxon>Pezizales</taxon>
        <taxon>Tuberaceae</taxon>
        <taxon>Tuber</taxon>
    </lineage>
</organism>
<evidence type="ECO:0000250" key="1"/>
<accession>O74703</accession>
<keyword id="KW-0134">Cell wall</keyword>
<keyword id="KW-0964">Secreted</keyword>
<sequence length="114" mass="12819">MSFKTRAVAESTYYIKSGAYYLAVTPERQIITQNTVYAWEVSIEGEYNYLKDPGTTHYLTDNGGQNLLNPRSDVDGKWGGGSEDQATQLINAETEKPLSVPYGQPFQTWLFVKV</sequence>
<protein>
    <recommendedName>
        <fullName>11.9 kDa wall protein</fullName>
    </recommendedName>
</protein>
<comment type="function">
    <text evidence="1">May play a role in the structure of the hypha-forming fruit bodies.</text>
</comment>
<comment type="subcellular location">
    <subcellularLocation>
        <location evidence="1">Secreted</location>
        <location evidence="1">Cell wall</location>
    </subcellularLocation>
</comment>
<proteinExistence type="inferred from homology"/>
<reference key="1">
    <citation type="submission" date="1998-09" db="EMBL/GenBank/DDBJ databases">
        <authorList>
            <person name="Agostini D."/>
            <person name="Polidori E."/>
            <person name="Stocchi V."/>
        </authorList>
    </citation>
    <scope>NUCLEOTIDE SEQUENCE [GENOMIC DNA]</scope>
</reference>
<dbReference type="EMBL" id="AF095583">
    <property type="protein sequence ID" value="AAC64194.1"/>
    <property type="molecule type" value="Genomic_DNA"/>
</dbReference>
<dbReference type="GO" id="GO:0005576">
    <property type="term" value="C:extracellular region"/>
    <property type="evidence" value="ECO:0007669"/>
    <property type="project" value="UniProtKB-KW"/>
</dbReference>